<accession>Q8GMC0</accession>
<dbReference type="EC" id="3.4.14.11" evidence="1"/>
<dbReference type="EMBL" id="AY055853">
    <property type="protein sequence ID" value="AAL17713.1"/>
    <property type="molecule type" value="Genomic_DNA"/>
</dbReference>
<dbReference type="SMR" id="Q8GMC0"/>
<dbReference type="ESTHER" id="strtr-pepx">
    <property type="family name" value="Lactobacillus_peptidase"/>
</dbReference>
<dbReference type="MEROPS" id="S15.001"/>
<dbReference type="eggNOG" id="COG2936">
    <property type="taxonomic scope" value="Bacteria"/>
</dbReference>
<dbReference type="GO" id="GO:0005737">
    <property type="term" value="C:cytoplasm"/>
    <property type="evidence" value="ECO:0007669"/>
    <property type="project" value="UniProtKB-SubCell"/>
</dbReference>
<dbReference type="GO" id="GO:0004177">
    <property type="term" value="F:aminopeptidase activity"/>
    <property type="evidence" value="ECO:0007669"/>
    <property type="project" value="UniProtKB-KW"/>
</dbReference>
<dbReference type="GO" id="GO:0008239">
    <property type="term" value="F:dipeptidyl-peptidase activity"/>
    <property type="evidence" value="ECO:0007669"/>
    <property type="project" value="UniProtKB-UniRule"/>
</dbReference>
<dbReference type="GO" id="GO:0008236">
    <property type="term" value="F:serine-type peptidase activity"/>
    <property type="evidence" value="ECO:0007669"/>
    <property type="project" value="UniProtKB-KW"/>
</dbReference>
<dbReference type="GO" id="GO:0006508">
    <property type="term" value="P:proteolysis"/>
    <property type="evidence" value="ECO:0007669"/>
    <property type="project" value="UniProtKB-KW"/>
</dbReference>
<dbReference type="Gene3D" id="1.10.246.70">
    <property type="match status" value="1"/>
</dbReference>
<dbReference type="Gene3D" id="3.40.50.1820">
    <property type="entry name" value="alpha/beta hydrolase"/>
    <property type="match status" value="1"/>
</dbReference>
<dbReference type="Gene3D" id="2.60.120.260">
    <property type="entry name" value="Galactose-binding domain-like"/>
    <property type="match status" value="1"/>
</dbReference>
<dbReference type="HAMAP" id="MF_00698">
    <property type="entry name" value="Aminopeptidase_S15"/>
    <property type="match status" value="1"/>
</dbReference>
<dbReference type="InterPro" id="IPR029058">
    <property type="entry name" value="AB_hydrolase_fold"/>
</dbReference>
<dbReference type="InterPro" id="IPR008979">
    <property type="entry name" value="Galactose-bd-like_sf"/>
</dbReference>
<dbReference type="InterPro" id="IPR008252">
    <property type="entry name" value="Pept_S15_Xpro"/>
</dbReference>
<dbReference type="InterPro" id="IPR015251">
    <property type="entry name" value="PepX_N_dom"/>
</dbReference>
<dbReference type="InterPro" id="IPR036313">
    <property type="entry name" value="PepX_N_dom_sf"/>
</dbReference>
<dbReference type="InterPro" id="IPR000383">
    <property type="entry name" value="Xaa-Pro-like_dom"/>
</dbReference>
<dbReference type="InterPro" id="IPR013736">
    <property type="entry name" value="Xaa-Pro_dipept_C"/>
</dbReference>
<dbReference type="NCBIfam" id="NF003783">
    <property type="entry name" value="PRK05371.1-4"/>
    <property type="match status" value="1"/>
</dbReference>
<dbReference type="Pfam" id="PF02129">
    <property type="entry name" value="Peptidase_S15"/>
    <property type="match status" value="1"/>
</dbReference>
<dbReference type="Pfam" id="PF08530">
    <property type="entry name" value="PepX_C"/>
    <property type="match status" value="1"/>
</dbReference>
<dbReference type="Pfam" id="PF09168">
    <property type="entry name" value="PepX_N"/>
    <property type="match status" value="1"/>
</dbReference>
<dbReference type="PRINTS" id="PR00923">
    <property type="entry name" value="LACTOPTASE"/>
</dbReference>
<dbReference type="SMART" id="SM00939">
    <property type="entry name" value="PepX_C"/>
    <property type="match status" value="1"/>
</dbReference>
<dbReference type="SMART" id="SM00940">
    <property type="entry name" value="PepX_N"/>
    <property type="match status" value="1"/>
</dbReference>
<dbReference type="SUPFAM" id="SSF53474">
    <property type="entry name" value="alpha/beta-Hydrolases"/>
    <property type="match status" value="1"/>
</dbReference>
<dbReference type="SUPFAM" id="SSF49785">
    <property type="entry name" value="Galactose-binding domain-like"/>
    <property type="match status" value="1"/>
</dbReference>
<dbReference type="SUPFAM" id="SSF81761">
    <property type="entry name" value="X-Prolyl dipeptidyl aminopeptidase PepX, N-terminal domain"/>
    <property type="match status" value="1"/>
</dbReference>
<keyword id="KW-0031">Aminopeptidase</keyword>
<keyword id="KW-0963">Cytoplasm</keyword>
<keyword id="KW-0378">Hydrolase</keyword>
<keyword id="KW-0645">Protease</keyword>
<keyword id="KW-0720">Serine protease</keyword>
<feature type="chain" id="PRO_0000220235" description="Xaa-Pro dipeptidyl-peptidase">
    <location>
        <begin position="1"/>
        <end position="755"/>
    </location>
</feature>
<feature type="active site" description="Charge relay system" evidence="1">
    <location>
        <position position="348"/>
    </location>
</feature>
<feature type="active site" description="Charge relay system" evidence="1">
    <location>
        <position position="468"/>
    </location>
</feature>
<feature type="active site" description="Charge relay system" evidence="1">
    <location>
        <position position="498"/>
    </location>
</feature>
<protein>
    <recommendedName>
        <fullName evidence="1">Xaa-Pro dipeptidyl-peptidase</fullName>
        <ecNumber evidence="1">3.4.14.11</ecNumber>
    </recommendedName>
    <alternativeName>
        <fullName evidence="1">X-Pro dipeptidyl-peptidase</fullName>
    </alternativeName>
    <alternativeName>
        <fullName evidence="1">X-prolyl-dipeptidyl aminopeptidase</fullName>
        <shortName evidence="1">X-PDAP</shortName>
    </alternativeName>
</protein>
<evidence type="ECO:0000255" key="1">
    <source>
        <dbReference type="HAMAP-Rule" id="MF_00698"/>
    </source>
</evidence>
<gene>
    <name evidence="1" type="primary">pepX</name>
</gene>
<comment type="function">
    <text evidence="1">Removes N-terminal dipeptides sequentially from polypeptides having unsubstituted N-termini provided that the penultimate residue is proline.</text>
</comment>
<comment type="catalytic activity">
    <reaction evidence="1">
        <text>Hydrolyzes Xaa-Pro-|- bonds to release unblocked, N-terminal dipeptides from substrates including Ala-Pro-|-p-nitroanilide and (sequentially) Tyr-Pro-|-Phe-Pro-|-Gly-Pro-|-Ile.</text>
        <dbReference type="EC" id="3.4.14.11"/>
    </reaction>
</comment>
<comment type="subunit">
    <text evidence="1">Homodimer.</text>
</comment>
<comment type="subcellular location">
    <subcellularLocation>
        <location evidence="1">Cytoplasm</location>
    </subcellularLocation>
</comment>
<comment type="similarity">
    <text evidence="1">Belongs to the peptidase S15 family.</text>
</comment>
<organism>
    <name type="scientific">Streptococcus thermophilus</name>
    <dbReference type="NCBI Taxonomy" id="1308"/>
    <lineage>
        <taxon>Bacteria</taxon>
        <taxon>Bacillati</taxon>
        <taxon>Bacillota</taxon>
        <taxon>Bacilli</taxon>
        <taxon>Lactobacillales</taxon>
        <taxon>Streptococcaceae</taxon>
        <taxon>Streptococcus</taxon>
    </lineage>
</organism>
<sequence length="755" mass="85632">MKFNQFSYIPVSPETAYQELRSLGFEVSLDASAKANFESFVRKYFLFFEDTDLALKNWIADPETDLLSFFQSDRPLTAEVFGLVALQLLGFVPNVDFTDSVAFLEKMAFPIAFDGSLNNLHQLLATRTQSGNTLIDQLVAQDLIPISNDYVFFNGKSLATFDTNQLHREVVYVETPVDTDKDGLLDLVKVTILRPNVDFPVPAMMTASPYQQGTNEPSSDKLTHKMEGDLLVKPAGKISLSRPEIKAPEADLTPINPVTKAEERFAHTDTYTLNDYMLARGVASIYVSGVGTFNSEGFMTSGDYQQVLAYKAVIDWLNGRARAFTSRSRQHTITADWASGKVTTTGLSYLGTMSNALATTGVDGLEMVIAEAGISSWYDYYRENGLLVSPGGYPGEDLDTLTEFTYSRALLAGEYLRHQKDYEAYLNELSTAIDRKHGDYNQFWHDRNYVQFADRVKATVVFTHGSQDWNVKPINVYQMFRALPKSLEKHLFFHNGAHVYMNAWQSIDFRESMNALICQKLLGLDNGYTLPTVIWQNNQSEQTWEVLDNFGHDNGKHIQLGKSEASIANHYEEEIFAKYGKAYQSFKDDLFMDKANAITLDFELDQDIQINGRVHLELRVKSSTNRGLISAQVLEMGDKKYLAPIPELKRMSLDNGRLFKEEALRELPFKQAKYRVITKGHLNLQNRKDLLSIENVTPNEWMTIGLDLQPTIYKPNKGDKLRLVLYTTDFEHTIRDNSDYEVTVDLSQSKMTLPY</sequence>
<proteinExistence type="inferred from homology"/>
<reference key="1">
    <citation type="journal article" date="2002" name="J. Appl. Microbiol.">
        <title>Cloning and sequencing of the gene encoding X-prolyl-dipeptidyl aminopeptidase (PepX) from Streptococcus thermophilus strain ACA-DC 4.</title>
        <authorList>
            <person name="Anastasiou R."/>
            <person name="Papadelli M."/>
            <person name="Georgalaki M.D."/>
            <person name="Kalantzopoulos G."/>
            <person name="Tsakalidou E."/>
        </authorList>
    </citation>
    <scope>NUCLEOTIDE SEQUENCE [GENOMIC DNA]</scope>
    <source>
        <strain>ACA-DC 4</strain>
    </source>
</reference>
<name>PEPX_STRTR</name>